<gene>
    <name evidence="1" type="primary">rpoB</name>
    <name type="ordered locus">Spea_0177</name>
</gene>
<comment type="function">
    <text evidence="1">DNA-dependent RNA polymerase catalyzes the transcription of DNA into RNA using the four ribonucleoside triphosphates as substrates.</text>
</comment>
<comment type="catalytic activity">
    <reaction evidence="1">
        <text>RNA(n) + a ribonucleoside 5'-triphosphate = RNA(n+1) + diphosphate</text>
        <dbReference type="Rhea" id="RHEA:21248"/>
        <dbReference type="Rhea" id="RHEA-COMP:14527"/>
        <dbReference type="Rhea" id="RHEA-COMP:17342"/>
        <dbReference type="ChEBI" id="CHEBI:33019"/>
        <dbReference type="ChEBI" id="CHEBI:61557"/>
        <dbReference type="ChEBI" id="CHEBI:140395"/>
        <dbReference type="EC" id="2.7.7.6"/>
    </reaction>
</comment>
<comment type="subunit">
    <text evidence="1">The RNAP catalytic core consists of 2 alpha, 1 beta, 1 beta' and 1 omega subunit. When a sigma factor is associated with the core the holoenzyme is formed, which can initiate transcription.</text>
</comment>
<comment type="similarity">
    <text evidence="1">Belongs to the RNA polymerase beta chain family.</text>
</comment>
<protein>
    <recommendedName>
        <fullName evidence="1">DNA-directed RNA polymerase subunit beta</fullName>
        <shortName evidence="1">RNAP subunit beta</shortName>
        <ecNumber evidence="1">2.7.7.6</ecNumber>
    </recommendedName>
    <alternativeName>
        <fullName evidence="1">RNA polymerase subunit beta</fullName>
    </alternativeName>
    <alternativeName>
        <fullName evidence="1">Transcriptase subunit beta</fullName>
    </alternativeName>
</protein>
<keyword id="KW-0240">DNA-directed RNA polymerase</keyword>
<keyword id="KW-0548">Nucleotidyltransferase</keyword>
<keyword id="KW-1185">Reference proteome</keyword>
<keyword id="KW-0804">Transcription</keyword>
<keyword id="KW-0808">Transferase</keyword>
<accession>A8GYW9</accession>
<sequence length="1343" mass="149715">MVYSYSEKKRIRKDFGKRPRVLDIPYLLSIQLDSFKKFTDQDPTGERGFEAAFRSVFPIKSFSGNSELQYVSYKLGEPVFDVKECQIRGVTYSAPLRVKLRMVLYDREAAPGTVKDIKEQEVYMGDIPLMTDNGTFVINGTERVIVSQLHRSPGVFFDHDRGKTHSSGKVLYNARIIPYRGSWLDFEFDPKDALFVRIDRRRKLAASIILRALDYSTQDILDLFFDRVNFKIKKDSLVMDLVADRLRGETASYDIKDAEGTVLVEKGRRITARHIRQLEKTNTTELEVPVEYIAGKISGQDYIDPDTGEVLVSANADISLEDLAKLSMAGIKEISTLYINELDNGAYISDTLRIDSTTNRLEALVEIYRMMRPGEPPTKDAAEALFNNLFFSEERYDLSKVGRMKFNRRLSIDDDEGTGILSKEDIVAVMKNIIAIRNGFDEVDDIDHLGNRRIRSVGEMAENQFRVGLVRVERAVRERLSLGDLNELMPQDLINAKPISAAVKEFFGSSQLSQFMDQNNPLSEVTHKRRISALGPGGLTRERAGFEVRDVHPTHYGRLCPIETPEGPNIGLINSLSTFARTNNYGFLETPYRKVIDGVVTDEVDYLSAIEEGRYVIAQAIVQLDENGRMMDELIACRHKGDSTFMGAADIQYMDVSPQQIISVAASLIPFLEHDDANRALMGANMQRQAVPTLKADKPLVGTGIERTLAVDSGVVVAAKRGGYVDYVDASRIVVKVNEAELTPGEAGIDIYNLTKYTRSNQNTCINQRPCCSVGDPIVRGDVLADGPSTDLGDLALGQNMRIAFMPWNGYNFEDSILISERVAQEDRFTTIHIQELSCIARDTKLGSEEITADIPNVGESALSKLDESGIVYIGAEVKGGDILVGKVTPKGETQLTPEEKLLRAIFGEKASDVKDSSLRVPNSVKGTIIDVQVFTRDGVEKDKRAVEIEEMHIAQAKKDLTEEFQILEDGVIGRARNLLIGAGFDEAQLAAIPRSQLLVQTIDDEVKQTELEQLAEQAEELKADFDKKFEIKRRKITQGDDLAPGVLKIVKVYLAVKRTIQPGDKMAGRHGNKGVISKICPVEDMPYDEKGNPVDIVLNPLGVPSRMNIGQVLEVHMGAAAKGIGNRITEMLEEQRELAELRGYIKQVYELGDEVIQKVDIDSFTDDEILRLAKNLKGGVPIATPAFDGAKEKEIKQMLELAGLPQSGQLTLIDGRTGNEFERKVTVGYMYMLKLNHLVDDKMHARSTGSYSLVTQQPLGGKAQFGGQRFGEMEVWALEAYGAAYTLQEMLTVKSDDVNGRTQMYKNIVDGNHQMQPGMPESFNVLLKEIRSLGINIELDTK</sequence>
<feature type="chain" id="PRO_1000086381" description="DNA-directed RNA polymerase subunit beta">
    <location>
        <begin position="1"/>
        <end position="1343"/>
    </location>
</feature>
<dbReference type="EC" id="2.7.7.6" evidence="1"/>
<dbReference type="EMBL" id="CP000851">
    <property type="protein sequence ID" value="ABV85506.1"/>
    <property type="molecule type" value="Genomic_DNA"/>
</dbReference>
<dbReference type="RefSeq" id="WP_012153452.1">
    <property type="nucleotide sequence ID" value="NC_009901.1"/>
</dbReference>
<dbReference type="SMR" id="A8GYW9"/>
<dbReference type="STRING" id="398579.Spea_0177"/>
<dbReference type="KEGG" id="spl:Spea_0177"/>
<dbReference type="eggNOG" id="COG0085">
    <property type="taxonomic scope" value="Bacteria"/>
</dbReference>
<dbReference type="HOGENOM" id="CLU_000524_4_3_6"/>
<dbReference type="OrthoDB" id="9803954at2"/>
<dbReference type="Proteomes" id="UP000002608">
    <property type="component" value="Chromosome"/>
</dbReference>
<dbReference type="GO" id="GO:0000428">
    <property type="term" value="C:DNA-directed RNA polymerase complex"/>
    <property type="evidence" value="ECO:0007669"/>
    <property type="project" value="UniProtKB-KW"/>
</dbReference>
<dbReference type="GO" id="GO:0003677">
    <property type="term" value="F:DNA binding"/>
    <property type="evidence" value="ECO:0007669"/>
    <property type="project" value="UniProtKB-UniRule"/>
</dbReference>
<dbReference type="GO" id="GO:0003899">
    <property type="term" value="F:DNA-directed RNA polymerase activity"/>
    <property type="evidence" value="ECO:0007669"/>
    <property type="project" value="UniProtKB-UniRule"/>
</dbReference>
<dbReference type="GO" id="GO:0032549">
    <property type="term" value="F:ribonucleoside binding"/>
    <property type="evidence" value="ECO:0007669"/>
    <property type="project" value="InterPro"/>
</dbReference>
<dbReference type="GO" id="GO:0006351">
    <property type="term" value="P:DNA-templated transcription"/>
    <property type="evidence" value="ECO:0007669"/>
    <property type="project" value="UniProtKB-UniRule"/>
</dbReference>
<dbReference type="CDD" id="cd00653">
    <property type="entry name" value="RNA_pol_B_RPB2"/>
    <property type="match status" value="1"/>
</dbReference>
<dbReference type="FunFam" id="2.40.270.10:FF:000003">
    <property type="entry name" value="DNA-directed RNA polymerase subunit beta"/>
    <property type="match status" value="1"/>
</dbReference>
<dbReference type="FunFam" id="2.40.270.10:FF:000004">
    <property type="entry name" value="DNA-directed RNA polymerase subunit beta"/>
    <property type="match status" value="1"/>
</dbReference>
<dbReference type="FunFam" id="2.40.50.100:FF:000006">
    <property type="entry name" value="DNA-directed RNA polymerase subunit beta"/>
    <property type="match status" value="1"/>
</dbReference>
<dbReference type="FunFam" id="2.40.50.150:FF:000001">
    <property type="entry name" value="DNA-directed RNA polymerase subunit beta"/>
    <property type="match status" value="1"/>
</dbReference>
<dbReference type="FunFam" id="3.90.1100.10:FF:000002">
    <property type="entry name" value="DNA-directed RNA polymerase subunit beta"/>
    <property type="match status" value="1"/>
</dbReference>
<dbReference type="FunFam" id="3.90.1110.10:FF:000001">
    <property type="entry name" value="DNA-directed RNA polymerase subunit beta"/>
    <property type="match status" value="1"/>
</dbReference>
<dbReference type="FunFam" id="3.90.1110.10:FF:000004">
    <property type="entry name" value="DNA-directed RNA polymerase subunit beta"/>
    <property type="match status" value="1"/>
</dbReference>
<dbReference type="FunFam" id="3.90.1800.10:FF:000001">
    <property type="entry name" value="DNA-directed RNA polymerase subunit beta"/>
    <property type="match status" value="1"/>
</dbReference>
<dbReference type="Gene3D" id="2.40.50.100">
    <property type="match status" value="1"/>
</dbReference>
<dbReference type="Gene3D" id="2.40.50.150">
    <property type="match status" value="1"/>
</dbReference>
<dbReference type="Gene3D" id="3.90.1100.10">
    <property type="match status" value="2"/>
</dbReference>
<dbReference type="Gene3D" id="2.30.150.10">
    <property type="entry name" value="DNA-directed RNA polymerase, beta subunit, external 1 domain"/>
    <property type="match status" value="1"/>
</dbReference>
<dbReference type="Gene3D" id="2.40.270.10">
    <property type="entry name" value="DNA-directed RNA polymerase, subunit 2, domain 6"/>
    <property type="match status" value="2"/>
</dbReference>
<dbReference type="Gene3D" id="3.90.1800.10">
    <property type="entry name" value="RNA polymerase alpha subunit dimerisation domain"/>
    <property type="match status" value="1"/>
</dbReference>
<dbReference type="Gene3D" id="3.90.1110.10">
    <property type="entry name" value="RNA polymerase Rpb2, domain 2"/>
    <property type="match status" value="2"/>
</dbReference>
<dbReference type="HAMAP" id="MF_01321">
    <property type="entry name" value="RNApol_bact_RpoB"/>
    <property type="match status" value="1"/>
</dbReference>
<dbReference type="InterPro" id="IPR042107">
    <property type="entry name" value="DNA-dir_RNA_pol_bsu_ext_1_sf"/>
</dbReference>
<dbReference type="InterPro" id="IPR019462">
    <property type="entry name" value="DNA-dir_RNA_pol_bsu_external_1"/>
</dbReference>
<dbReference type="InterPro" id="IPR015712">
    <property type="entry name" value="DNA-dir_RNA_pol_su2"/>
</dbReference>
<dbReference type="InterPro" id="IPR007120">
    <property type="entry name" value="DNA-dir_RNAP_su2_dom"/>
</dbReference>
<dbReference type="InterPro" id="IPR037033">
    <property type="entry name" value="DNA-dir_RNAP_su2_hyb_sf"/>
</dbReference>
<dbReference type="InterPro" id="IPR010243">
    <property type="entry name" value="RNA_pol_bsu_bac"/>
</dbReference>
<dbReference type="InterPro" id="IPR007121">
    <property type="entry name" value="RNA_pol_bsu_CS"/>
</dbReference>
<dbReference type="InterPro" id="IPR007644">
    <property type="entry name" value="RNA_pol_bsu_protrusion"/>
</dbReference>
<dbReference type="InterPro" id="IPR007642">
    <property type="entry name" value="RNA_pol_Rpb2_2"/>
</dbReference>
<dbReference type="InterPro" id="IPR037034">
    <property type="entry name" value="RNA_pol_Rpb2_2_sf"/>
</dbReference>
<dbReference type="InterPro" id="IPR007645">
    <property type="entry name" value="RNA_pol_Rpb2_3"/>
</dbReference>
<dbReference type="InterPro" id="IPR007641">
    <property type="entry name" value="RNA_pol_Rpb2_7"/>
</dbReference>
<dbReference type="InterPro" id="IPR014724">
    <property type="entry name" value="RNA_pol_RPB2_OB-fold"/>
</dbReference>
<dbReference type="NCBIfam" id="NF001616">
    <property type="entry name" value="PRK00405.1"/>
    <property type="match status" value="1"/>
</dbReference>
<dbReference type="NCBIfam" id="TIGR02013">
    <property type="entry name" value="rpoB"/>
    <property type="match status" value="1"/>
</dbReference>
<dbReference type="PANTHER" id="PTHR20856">
    <property type="entry name" value="DNA-DIRECTED RNA POLYMERASE I SUBUNIT 2"/>
    <property type="match status" value="1"/>
</dbReference>
<dbReference type="Pfam" id="PF04563">
    <property type="entry name" value="RNA_pol_Rpb2_1"/>
    <property type="match status" value="1"/>
</dbReference>
<dbReference type="Pfam" id="PF04561">
    <property type="entry name" value="RNA_pol_Rpb2_2"/>
    <property type="match status" value="2"/>
</dbReference>
<dbReference type="Pfam" id="PF04565">
    <property type="entry name" value="RNA_pol_Rpb2_3"/>
    <property type="match status" value="1"/>
</dbReference>
<dbReference type="Pfam" id="PF10385">
    <property type="entry name" value="RNA_pol_Rpb2_45"/>
    <property type="match status" value="1"/>
</dbReference>
<dbReference type="Pfam" id="PF00562">
    <property type="entry name" value="RNA_pol_Rpb2_6"/>
    <property type="match status" value="1"/>
</dbReference>
<dbReference type="Pfam" id="PF04560">
    <property type="entry name" value="RNA_pol_Rpb2_7"/>
    <property type="match status" value="1"/>
</dbReference>
<dbReference type="SUPFAM" id="SSF64484">
    <property type="entry name" value="beta and beta-prime subunits of DNA dependent RNA-polymerase"/>
    <property type="match status" value="1"/>
</dbReference>
<dbReference type="PROSITE" id="PS01166">
    <property type="entry name" value="RNA_POL_BETA"/>
    <property type="match status" value="1"/>
</dbReference>
<organism>
    <name type="scientific">Shewanella pealeana (strain ATCC 700345 / ANG-SQ1)</name>
    <dbReference type="NCBI Taxonomy" id="398579"/>
    <lineage>
        <taxon>Bacteria</taxon>
        <taxon>Pseudomonadati</taxon>
        <taxon>Pseudomonadota</taxon>
        <taxon>Gammaproteobacteria</taxon>
        <taxon>Alteromonadales</taxon>
        <taxon>Shewanellaceae</taxon>
        <taxon>Shewanella</taxon>
    </lineage>
</organism>
<proteinExistence type="inferred from homology"/>
<evidence type="ECO:0000255" key="1">
    <source>
        <dbReference type="HAMAP-Rule" id="MF_01321"/>
    </source>
</evidence>
<reference key="1">
    <citation type="submission" date="2007-10" db="EMBL/GenBank/DDBJ databases">
        <title>Complete sequence of Shewanella pealeana ATCC 700345.</title>
        <authorList>
            <consortium name="US DOE Joint Genome Institute"/>
            <person name="Copeland A."/>
            <person name="Lucas S."/>
            <person name="Lapidus A."/>
            <person name="Barry K."/>
            <person name="Glavina del Rio T."/>
            <person name="Dalin E."/>
            <person name="Tice H."/>
            <person name="Pitluck S."/>
            <person name="Chertkov O."/>
            <person name="Brettin T."/>
            <person name="Bruce D."/>
            <person name="Detter J.C."/>
            <person name="Han C."/>
            <person name="Schmutz J."/>
            <person name="Larimer F."/>
            <person name="Land M."/>
            <person name="Hauser L."/>
            <person name="Kyrpides N."/>
            <person name="Kim E."/>
            <person name="Zhao J.-S.Z."/>
            <person name="Manno D."/>
            <person name="Hawari J."/>
            <person name="Richardson P."/>
        </authorList>
    </citation>
    <scope>NUCLEOTIDE SEQUENCE [LARGE SCALE GENOMIC DNA]</scope>
    <source>
        <strain>ATCC 700345 / ANG-SQ1</strain>
    </source>
</reference>
<name>RPOB_SHEPA</name>